<feature type="chain" id="PRO_0000266587" description="Large ribosomal subunit protein uL14">
    <location>
        <begin position="1"/>
        <end position="122"/>
    </location>
</feature>
<dbReference type="EMBL" id="AE013598">
    <property type="protein sequence ID" value="AAW76827.1"/>
    <property type="molecule type" value="Genomic_DNA"/>
</dbReference>
<dbReference type="SMR" id="Q5GWU4"/>
<dbReference type="STRING" id="291331.XOO3573"/>
<dbReference type="KEGG" id="xoo:XOO3573"/>
<dbReference type="HOGENOM" id="CLU_095071_2_1_6"/>
<dbReference type="Proteomes" id="UP000006735">
    <property type="component" value="Chromosome"/>
</dbReference>
<dbReference type="GO" id="GO:0022625">
    <property type="term" value="C:cytosolic large ribosomal subunit"/>
    <property type="evidence" value="ECO:0007669"/>
    <property type="project" value="TreeGrafter"/>
</dbReference>
<dbReference type="GO" id="GO:0070180">
    <property type="term" value="F:large ribosomal subunit rRNA binding"/>
    <property type="evidence" value="ECO:0007669"/>
    <property type="project" value="TreeGrafter"/>
</dbReference>
<dbReference type="GO" id="GO:0003735">
    <property type="term" value="F:structural constituent of ribosome"/>
    <property type="evidence" value="ECO:0007669"/>
    <property type="project" value="InterPro"/>
</dbReference>
<dbReference type="GO" id="GO:0006412">
    <property type="term" value="P:translation"/>
    <property type="evidence" value="ECO:0007669"/>
    <property type="project" value="UniProtKB-UniRule"/>
</dbReference>
<dbReference type="CDD" id="cd00337">
    <property type="entry name" value="Ribosomal_uL14"/>
    <property type="match status" value="1"/>
</dbReference>
<dbReference type="FunFam" id="2.40.150.20:FF:000001">
    <property type="entry name" value="50S ribosomal protein L14"/>
    <property type="match status" value="1"/>
</dbReference>
<dbReference type="Gene3D" id="2.40.150.20">
    <property type="entry name" value="Ribosomal protein L14"/>
    <property type="match status" value="1"/>
</dbReference>
<dbReference type="HAMAP" id="MF_01367">
    <property type="entry name" value="Ribosomal_uL14"/>
    <property type="match status" value="1"/>
</dbReference>
<dbReference type="InterPro" id="IPR000218">
    <property type="entry name" value="Ribosomal_uL14"/>
</dbReference>
<dbReference type="InterPro" id="IPR005745">
    <property type="entry name" value="Ribosomal_uL14_bac-type"/>
</dbReference>
<dbReference type="InterPro" id="IPR019972">
    <property type="entry name" value="Ribosomal_uL14_CS"/>
</dbReference>
<dbReference type="InterPro" id="IPR036853">
    <property type="entry name" value="Ribosomal_uL14_sf"/>
</dbReference>
<dbReference type="NCBIfam" id="TIGR01067">
    <property type="entry name" value="rplN_bact"/>
    <property type="match status" value="1"/>
</dbReference>
<dbReference type="PANTHER" id="PTHR11761">
    <property type="entry name" value="50S/60S RIBOSOMAL PROTEIN L14/L23"/>
    <property type="match status" value="1"/>
</dbReference>
<dbReference type="PANTHER" id="PTHR11761:SF3">
    <property type="entry name" value="LARGE RIBOSOMAL SUBUNIT PROTEIN UL14M"/>
    <property type="match status" value="1"/>
</dbReference>
<dbReference type="Pfam" id="PF00238">
    <property type="entry name" value="Ribosomal_L14"/>
    <property type="match status" value="1"/>
</dbReference>
<dbReference type="SMART" id="SM01374">
    <property type="entry name" value="Ribosomal_L14"/>
    <property type="match status" value="1"/>
</dbReference>
<dbReference type="SUPFAM" id="SSF50193">
    <property type="entry name" value="Ribosomal protein L14"/>
    <property type="match status" value="1"/>
</dbReference>
<dbReference type="PROSITE" id="PS00049">
    <property type="entry name" value="RIBOSOMAL_L14"/>
    <property type="match status" value="1"/>
</dbReference>
<comment type="function">
    <text evidence="1">Binds to 23S rRNA. Forms part of two intersubunit bridges in the 70S ribosome.</text>
</comment>
<comment type="subunit">
    <text evidence="1">Part of the 50S ribosomal subunit. Forms a cluster with proteins L3 and L19. In the 70S ribosome, L14 and L19 interact and together make contacts with the 16S rRNA in bridges B5 and B8.</text>
</comment>
<comment type="similarity">
    <text evidence="1">Belongs to the universal ribosomal protein uL14 family.</text>
</comment>
<evidence type="ECO:0000255" key="1">
    <source>
        <dbReference type="HAMAP-Rule" id="MF_01367"/>
    </source>
</evidence>
<evidence type="ECO:0000305" key="2"/>
<proteinExistence type="inferred from homology"/>
<gene>
    <name evidence="1" type="primary">rplN</name>
    <name type="ordered locus">XOO3573</name>
</gene>
<reference key="1">
    <citation type="journal article" date="2005" name="Nucleic Acids Res.">
        <title>The genome sequence of Xanthomonas oryzae pathovar oryzae KACC10331, the bacterial blight pathogen of rice.</title>
        <authorList>
            <person name="Lee B.-M."/>
            <person name="Park Y.-J."/>
            <person name="Park D.-S."/>
            <person name="Kang H.-W."/>
            <person name="Kim J.-G."/>
            <person name="Song E.-S."/>
            <person name="Park I.-C."/>
            <person name="Yoon U.-H."/>
            <person name="Hahn J.-H."/>
            <person name="Koo B.-S."/>
            <person name="Lee G.-B."/>
            <person name="Kim H."/>
            <person name="Park H.-S."/>
            <person name="Yoon K.-O."/>
            <person name="Kim J.-H."/>
            <person name="Jung C.-H."/>
            <person name="Koh N.-H."/>
            <person name="Seo J.-S."/>
            <person name="Go S.-J."/>
        </authorList>
    </citation>
    <scope>NUCLEOTIDE SEQUENCE [LARGE SCALE GENOMIC DNA]</scope>
    <source>
        <strain>KACC10331 / KXO85</strain>
    </source>
</reference>
<protein>
    <recommendedName>
        <fullName evidence="1">Large ribosomal subunit protein uL14</fullName>
    </recommendedName>
    <alternativeName>
        <fullName evidence="2">50S ribosomal protein L14</fullName>
    </alternativeName>
</protein>
<accession>Q5GWU4</accession>
<keyword id="KW-1185">Reference proteome</keyword>
<keyword id="KW-0687">Ribonucleoprotein</keyword>
<keyword id="KW-0689">Ribosomal protein</keyword>
<keyword id="KW-0694">RNA-binding</keyword>
<keyword id="KW-0699">rRNA-binding</keyword>
<organism>
    <name type="scientific">Xanthomonas oryzae pv. oryzae (strain KACC10331 / KXO85)</name>
    <dbReference type="NCBI Taxonomy" id="291331"/>
    <lineage>
        <taxon>Bacteria</taxon>
        <taxon>Pseudomonadati</taxon>
        <taxon>Pseudomonadota</taxon>
        <taxon>Gammaproteobacteria</taxon>
        <taxon>Lysobacterales</taxon>
        <taxon>Lysobacteraceae</taxon>
        <taxon>Xanthomonas</taxon>
    </lineage>
</organism>
<sequence>MIQMQSYLDVADNSGAKEVMCIKVLGGSKRRYARIGDIIKVTVKDAIPRGKVKKGEVYDAVVVRTRKGVRRADGSLIRFDGNAAVLLNNKQEPIGTRIFGPVTRELRSEKFMKIVSLAPEVL</sequence>
<name>RL14_XANOR</name>